<accession>Q821W4</accession>
<evidence type="ECO:0000255" key="1">
    <source>
        <dbReference type="HAMAP-Rule" id="MF_00484"/>
    </source>
</evidence>
<dbReference type="EC" id="2.4.1.21" evidence="1"/>
<dbReference type="EMBL" id="AE015925">
    <property type="protein sequence ID" value="AAP05562.1"/>
    <property type="molecule type" value="Genomic_DNA"/>
</dbReference>
<dbReference type="RefSeq" id="WP_011006776.1">
    <property type="nucleotide sequence ID" value="NC_003361.3"/>
</dbReference>
<dbReference type="SMR" id="Q821W4"/>
<dbReference type="STRING" id="227941.CCA_00821"/>
<dbReference type="CAZy" id="GT5">
    <property type="family name" value="Glycosyltransferase Family 5"/>
</dbReference>
<dbReference type="KEGG" id="cca:CCA_00821"/>
<dbReference type="eggNOG" id="COG0297">
    <property type="taxonomic scope" value="Bacteria"/>
</dbReference>
<dbReference type="HOGENOM" id="CLU_009583_18_5_0"/>
<dbReference type="OrthoDB" id="9808590at2"/>
<dbReference type="UniPathway" id="UPA00164"/>
<dbReference type="Proteomes" id="UP000002193">
    <property type="component" value="Chromosome"/>
</dbReference>
<dbReference type="GO" id="GO:0009011">
    <property type="term" value="F:alpha-1,4-glucan glucosyltransferase (ADP-glucose donor) activity"/>
    <property type="evidence" value="ECO:0007669"/>
    <property type="project" value="UniProtKB-UniRule"/>
</dbReference>
<dbReference type="GO" id="GO:0004373">
    <property type="term" value="F:alpha-1,4-glucan glucosyltransferase (UDP-glucose donor) activity"/>
    <property type="evidence" value="ECO:0007669"/>
    <property type="project" value="InterPro"/>
</dbReference>
<dbReference type="GO" id="GO:0005978">
    <property type="term" value="P:glycogen biosynthetic process"/>
    <property type="evidence" value="ECO:0007669"/>
    <property type="project" value="UniProtKB-UniRule"/>
</dbReference>
<dbReference type="CDD" id="cd03791">
    <property type="entry name" value="GT5_Glycogen_synthase_DULL1-like"/>
    <property type="match status" value="1"/>
</dbReference>
<dbReference type="Gene3D" id="3.40.50.2000">
    <property type="entry name" value="Glycogen Phosphorylase B"/>
    <property type="match status" value="2"/>
</dbReference>
<dbReference type="HAMAP" id="MF_00484">
    <property type="entry name" value="Glycogen_synth"/>
    <property type="match status" value="1"/>
</dbReference>
<dbReference type="InterPro" id="IPR001296">
    <property type="entry name" value="Glyco_trans_1"/>
</dbReference>
<dbReference type="InterPro" id="IPR011835">
    <property type="entry name" value="GS/SS"/>
</dbReference>
<dbReference type="InterPro" id="IPR013534">
    <property type="entry name" value="Starch_synth_cat_dom"/>
</dbReference>
<dbReference type="NCBIfam" id="TIGR02095">
    <property type="entry name" value="glgA"/>
    <property type="match status" value="1"/>
</dbReference>
<dbReference type="NCBIfam" id="NF001904">
    <property type="entry name" value="PRK00654.2-3"/>
    <property type="match status" value="1"/>
</dbReference>
<dbReference type="PANTHER" id="PTHR46083">
    <property type="match status" value="1"/>
</dbReference>
<dbReference type="PANTHER" id="PTHR46083:SF1">
    <property type="entry name" value="GLYCOGEN SYNTHASE 2-RELATED"/>
    <property type="match status" value="1"/>
</dbReference>
<dbReference type="Pfam" id="PF08323">
    <property type="entry name" value="Glyco_transf_5"/>
    <property type="match status" value="1"/>
</dbReference>
<dbReference type="Pfam" id="PF00534">
    <property type="entry name" value="Glycos_transf_1"/>
    <property type="match status" value="1"/>
</dbReference>
<dbReference type="SUPFAM" id="SSF53756">
    <property type="entry name" value="UDP-Glycosyltransferase/glycogen phosphorylase"/>
    <property type="match status" value="1"/>
</dbReference>
<proteinExistence type="inferred from homology"/>
<gene>
    <name evidence="1" type="primary">glgA</name>
    <name type="ordered locus">CCA_00821</name>
</gene>
<sequence>MKIIQTAVEFAPFIKAGGLGDAVYGLSKALSESHDVEVLLPFFPLITPSFSSQVIDEKVFSYEFLGRQHAHSISYSYEGMILTIIKLDSQLDLFSTSTIYTEDDTLRFSAFSAAAAAYIGELDHVDIVHMHDWHMGLLSGLLKEPNRPHYPKRIFTIHNFSYRGYCSTQLLGTSGISDFGLSNYQLYRDPQMSVLLKGALYCSDYITTVSPTYAQEILNDYSDYEMHDAIMARRHVFCGILNGIDEQIWNPETDASLAVNYSKDLLDAPDVLFTKKEENKNALYEKLGLSYEYSPLMCIISRIVEQKGPEFMKAAILHAMENGYALVIVGTCYDPEIQRKFTNLQESLTTSPNIRIILDYNDPLARLVYGAADMICIPSHFEPCGLTQLIGMRYGTVPLVRSTGGLADTVVTGINGFTFSQTDNFNDFLHMLTLAITTYRQEPDIWFQLVEEGMLRSSGLTTMAIHYLGVYNSLL</sequence>
<organism>
    <name type="scientific">Chlamydia caviae (strain ATCC VR-813 / DSM 19441 / 03DC25 / GPIC)</name>
    <name type="common">Chlamydophila caviae</name>
    <dbReference type="NCBI Taxonomy" id="227941"/>
    <lineage>
        <taxon>Bacteria</taxon>
        <taxon>Pseudomonadati</taxon>
        <taxon>Chlamydiota</taxon>
        <taxon>Chlamydiia</taxon>
        <taxon>Chlamydiales</taxon>
        <taxon>Chlamydiaceae</taxon>
        <taxon>Chlamydia/Chlamydophila group</taxon>
        <taxon>Chlamydia</taxon>
    </lineage>
</organism>
<name>GLGA_CHLCV</name>
<feature type="chain" id="PRO_0000188602" description="Glycogen synthase">
    <location>
        <begin position="1"/>
        <end position="475"/>
    </location>
</feature>
<feature type="binding site" evidence="1">
    <location>
        <position position="15"/>
    </location>
    <ligand>
        <name>ADP-alpha-D-glucose</name>
        <dbReference type="ChEBI" id="CHEBI:57498"/>
    </ligand>
</feature>
<reference key="1">
    <citation type="journal article" date="2003" name="Nucleic Acids Res.">
        <title>Genome sequence of Chlamydophila caviae (Chlamydia psittaci GPIC): examining the role of niche-specific genes in the evolution of the Chlamydiaceae.</title>
        <authorList>
            <person name="Read T.D."/>
            <person name="Myers G.S.A."/>
            <person name="Brunham R.C."/>
            <person name="Nelson W.C."/>
            <person name="Paulsen I.T."/>
            <person name="Heidelberg J.F."/>
            <person name="Holtzapple E.K."/>
            <person name="Khouri H.M."/>
            <person name="Federova N.B."/>
            <person name="Carty H.A."/>
            <person name="Umayam L.A."/>
            <person name="Haft D.H."/>
            <person name="Peterson J.D."/>
            <person name="Beanan M.J."/>
            <person name="White O."/>
            <person name="Salzberg S.L."/>
            <person name="Hsia R.-C."/>
            <person name="McClarty G."/>
            <person name="Rank R.G."/>
            <person name="Bavoil P.M."/>
            <person name="Fraser C.M."/>
        </authorList>
    </citation>
    <scope>NUCLEOTIDE SEQUENCE [LARGE SCALE GENOMIC DNA]</scope>
    <source>
        <strain>ATCC VR-813 / DSM 19441 / 03DC25 / GPIC</strain>
    </source>
</reference>
<protein>
    <recommendedName>
        <fullName evidence="1">Glycogen synthase</fullName>
        <ecNumber evidence="1">2.4.1.21</ecNumber>
    </recommendedName>
    <alternativeName>
        <fullName evidence="1">Starch [bacterial glycogen] synthase</fullName>
    </alternativeName>
</protein>
<keyword id="KW-0320">Glycogen biosynthesis</keyword>
<keyword id="KW-0328">Glycosyltransferase</keyword>
<keyword id="KW-0808">Transferase</keyword>
<comment type="function">
    <text evidence="1">Synthesizes alpha-1,4-glucan chains using ADP-glucose.</text>
</comment>
<comment type="catalytic activity">
    <reaction evidence="1">
        <text>[(1-&gt;4)-alpha-D-glucosyl](n) + ADP-alpha-D-glucose = [(1-&gt;4)-alpha-D-glucosyl](n+1) + ADP + H(+)</text>
        <dbReference type="Rhea" id="RHEA:18189"/>
        <dbReference type="Rhea" id="RHEA-COMP:9584"/>
        <dbReference type="Rhea" id="RHEA-COMP:9587"/>
        <dbReference type="ChEBI" id="CHEBI:15378"/>
        <dbReference type="ChEBI" id="CHEBI:15444"/>
        <dbReference type="ChEBI" id="CHEBI:57498"/>
        <dbReference type="ChEBI" id="CHEBI:456216"/>
        <dbReference type="EC" id="2.4.1.21"/>
    </reaction>
</comment>
<comment type="pathway">
    <text evidence="1">Glycan biosynthesis; glycogen biosynthesis.</text>
</comment>
<comment type="similarity">
    <text evidence="1">Belongs to the glycosyltransferase 1 family. Bacterial/plant glycogen synthase subfamily.</text>
</comment>